<organism>
    <name type="scientific">Shewanella sediminis (strain HAW-EB3)</name>
    <dbReference type="NCBI Taxonomy" id="425104"/>
    <lineage>
        <taxon>Bacteria</taxon>
        <taxon>Pseudomonadati</taxon>
        <taxon>Pseudomonadota</taxon>
        <taxon>Gammaproteobacteria</taxon>
        <taxon>Alteromonadales</taxon>
        <taxon>Shewanellaceae</taxon>
        <taxon>Shewanella</taxon>
    </lineage>
</organism>
<feature type="chain" id="PRO_1000074844" description="Leucine--tRNA ligase">
    <location>
        <begin position="1"/>
        <end position="863"/>
    </location>
</feature>
<feature type="short sequence motif" description="'HIGH' region">
    <location>
        <begin position="42"/>
        <end position="52"/>
    </location>
</feature>
<feature type="short sequence motif" description="'KMSKS' region">
    <location>
        <begin position="622"/>
        <end position="626"/>
    </location>
</feature>
<feature type="binding site" evidence="1">
    <location>
        <position position="625"/>
    </location>
    <ligand>
        <name>ATP</name>
        <dbReference type="ChEBI" id="CHEBI:30616"/>
    </ligand>
</feature>
<comment type="catalytic activity">
    <reaction evidence="1">
        <text>tRNA(Leu) + L-leucine + ATP = L-leucyl-tRNA(Leu) + AMP + diphosphate</text>
        <dbReference type="Rhea" id="RHEA:11688"/>
        <dbReference type="Rhea" id="RHEA-COMP:9613"/>
        <dbReference type="Rhea" id="RHEA-COMP:9622"/>
        <dbReference type="ChEBI" id="CHEBI:30616"/>
        <dbReference type="ChEBI" id="CHEBI:33019"/>
        <dbReference type="ChEBI" id="CHEBI:57427"/>
        <dbReference type="ChEBI" id="CHEBI:78442"/>
        <dbReference type="ChEBI" id="CHEBI:78494"/>
        <dbReference type="ChEBI" id="CHEBI:456215"/>
        <dbReference type="EC" id="6.1.1.4"/>
    </reaction>
</comment>
<comment type="subcellular location">
    <subcellularLocation>
        <location evidence="1">Cytoplasm</location>
    </subcellularLocation>
</comment>
<comment type="similarity">
    <text evidence="1">Belongs to the class-I aminoacyl-tRNA synthetase family.</text>
</comment>
<gene>
    <name evidence="1" type="primary">leuS</name>
    <name type="ordered locus">Ssed_3479</name>
</gene>
<dbReference type="EC" id="6.1.1.4" evidence="1"/>
<dbReference type="EMBL" id="CP000821">
    <property type="protein sequence ID" value="ABV38083.1"/>
    <property type="molecule type" value="Genomic_DNA"/>
</dbReference>
<dbReference type="RefSeq" id="WP_012143813.1">
    <property type="nucleotide sequence ID" value="NC_009831.1"/>
</dbReference>
<dbReference type="SMR" id="A8FZ10"/>
<dbReference type="STRING" id="425104.Ssed_3479"/>
<dbReference type="KEGG" id="sse:Ssed_3479"/>
<dbReference type="eggNOG" id="COG0495">
    <property type="taxonomic scope" value="Bacteria"/>
</dbReference>
<dbReference type="HOGENOM" id="CLU_004427_0_0_6"/>
<dbReference type="OrthoDB" id="9810365at2"/>
<dbReference type="Proteomes" id="UP000002015">
    <property type="component" value="Chromosome"/>
</dbReference>
<dbReference type="GO" id="GO:0005829">
    <property type="term" value="C:cytosol"/>
    <property type="evidence" value="ECO:0007669"/>
    <property type="project" value="TreeGrafter"/>
</dbReference>
<dbReference type="GO" id="GO:0002161">
    <property type="term" value="F:aminoacyl-tRNA deacylase activity"/>
    <property type="evidence" value="ECO:0007669"/>
    <property type="project" value="InterPro"/>
</dbReference>
<dbReference type="GO" id="GO:0005524">
    <property type="term" value="F:ATP binding"/>
    <property type="evidence" value="ECO:0007669"/>
    <property type="project" value="UniProtKB-UniRule"/>
</dbReference>
<dbReference type="GO" id="GO:0004823">
    <property type="term" value="F:leucine-tRNA ligase activity"/>
    <property type="evidence" value="ECO:0007669"/>
    <property type="project" value="UniProtKB-UniRule"/>
</dbReference>
<dbReference type="GO" id="GO:0006429">
    <property type="term" value="P:leucyl-tRNA aminoacylation"/>
    <property type="evidence" value="ECO:0007669"/>
    <property type="project" value="UniProtKB-UniRule"/>
</dbReference>
<dbReference type="CDD" id="cd07958">
    <property type="entry name" value="Anticodon_Ia_Leu_BEm"/>
    <property type="match status" value="1"/>
</dbReference>
<dbReference type="CDD" id="cd00812">
    <property type="entry name" value="LeuRS_core"/>
    <property type="match status" value="1"/>
</dbReference>
<dbReference type="FunFam" id="1.10.730.10:FF:000002">
    <property type="entry name" value="Leucine--tRNA ligase"/>
    <property type="match status" value="1"/>
</dbReference>
<dbReference type="FunFam" id="1.10.730.10:FF:000003">
    <property type="entry name" value="Leucine--tRNA ligase"/>
    <property type="match status" value="1"/>
</dbReference>
<dbReference type="FunFam" id="2.20.28.290:FF:000001">
    <property type="entry name" value="Leucine--tRNA ligase"/>
    <property type="match status" value="1"/>
</dbReference>
<dbReference type="FunFam" id="3.10.20.590:FF:000001">
    <property type="entry name" value="Leucine--tRNA ligase"/>
    <property type="match status" value="1"/>
</dbReference>
<dbReference type="FunFam" id="3.40.50.620:FF:000003">
    <property type="entry name" value="Leucine--tRNA ligase"/>
    <property type="match status" value="1"/>
</dbReference>
<dbReference type="FunFam" id="3.40.50.620:FF:000124">
    <property type="entry name" value="Leucine--tRNA ligase"/>
    <property type="match status" value="1"/>
</dbReference>
<dbReference type="FunFam" id="3.90.740.10:FF:000012">
    <property type="entry name" value="Leucine--tRNA ligase"/>
    <property type="match status" value="1"/>
</dbReference>
<dbReference type="Gene3D" id="2.20.28.290">
    <property type="match status" value="1"/>
</dbReference>
<dbReference type="Gene3D" id="3.10.20.590">
    <property type="match status" value="1"/>
</dbReference>
<dbReference type="Gene3D" id="3.40.50.620">
    <property type="entry name" value="HUPs"/>
    <property type="match status" value="2"/>
</dbReference>
<dbReference type="Gene3D" id="1.10.730.10">
    <property type="entry name" value="Isoleucyl-tRNA Synthetase, Domain 1"/>
    <property type="match status" value="1"/>
</dbReference>
<dbReference type="HAMAP" id="MF_00049_B">
    <property type="entry name" value="Leu_tRNA_synth_B"/>
    <property type="match status" value="1"/>
</dbReference>
<dbReference type="InterPro" id="IPR001412">
    <property type="entry name" value="aa-tRNA-synth_I_CS"/>
</dbReference>
<dbReference type="InterPro" id="IPR002300">
    <property type="entry name" value="aa-tRNA-synth_Ia"/>
</dbReference>
<dbReference type="InterPro" id="IPR002302">
    <property type="entry name" value="Leu-tRNA-ligase"/>
</dbReference>
<dbReference type="InterPro" id="IPR025709">
    <property type="entry name" value="Leu_tRNA-synth_edit"/>
</dbReference>
<dbReference type="InterPro" id="IPR013155">
    <property type="entry name" value="M/V/L/I-tRNA-synth_anticd-bd"/>
</dbReference>
<dbReference type="InterPro" id="IPR015413">
    <property type="entry name" value="Methionyl/Leucyl_tRNA_Synth"/>
</dbReference>
<dbReference type="InterPro" id="IPR014729">
    <property type="entry name" value="Rossmann-like_a/b/a_fold"/>
</dbReference>
<dbReference type="InterPro" id="IPR009080">
    <property type="entry name" value="tRNAsynth_Ia_anticodon-bd"/>
</dbReference>
<dbReference type="InterPro" id="IPR009008">
    <property type="entry name" value="Val/Leu/Ile-tRNA-synth_edit"/>
</dbReference>
<dbReference type="NCBIfam" id="TIGR00396">
    <property type="entry name" value="leuS_bact"/>
    <property type="match status" value="1"/>
</dbReference>
<dbReference type="PANTHER" id="PTHR43740:SF2">
    <property type="entry name" value="LEUCINE--TRNA LIGASE, MITOCHONDRIAL"/>
    <property type="match status" value="1"/>
</dbReference>
<dbReference type="PANTHER" id="PTHR43740">
    <property type="entry name" value="LEUCYL-TRNA SYNTHETASE"/>
    <property type="match status" value="1"/>
</dbReference>
<dbReference type="Pfam" id="PF08264">
    <property type="entry name" value="Anticodon_1"/>
    <property type="match status" value="1"/>
</dbReference>
<dbReference type="Pfam" id="PF00133">
    <property type="entry name" value="tRNA-synt_1"/>
    <property type="match status" value="2"/>
</dbReference>
<dbReference type="Pfam" id="PF13603">
    <property type="entry name" value="tRNA-synt_1_2"/>
    <property type="match status" value="1"/>
</dbReference>
<dbReference type="Pfam" id="PF09334">
    <property type="entry name" value="tRNA-synt_1g"/>
    <property type="match status" value="1"/>
</dbReference>
<dbReference type="PRINTS" id="PR00985">
    <property type="entry name" value="TRNASYNTHLEU"/>
</dbReference>
<dbReference type="SUPFAM" id="SSF47323">
    <property type="entry name" value="Anticodon-binding domain of a subclass of class I aminoacyl-tRNA synthetases"/>
    <property type="match status" value="1"/>
</dbReference>
<dbReference type="SUPFAM" id="SSF52374">
    <property type="entry name" value="Nucleotidylyl transferase"/>
    <property type="match status" value="1"/>
</dbReference>
<dbReference type="SUPFAM" id="SSF50677">
    <property type="entry name" value="ValRS/IleRS/LeuRS editing domain"/>
    <property type="match status" value="1"/>
</dbReference>
<dbReference type="PROSITE" id="PS00178">
    <property type="entry name" value="AA_TRNA_LIGASE_I"/>
    <property type="match status" value="1"/>
</dbReference>
<name>SYL_SHESH</name>
<proteinExistence type="inferred from homology"/>
<protein>
    <recommendedName>
        <fullName evidence="1">Leucine--tRNA ligase</fullName>
        <ecNumber evidence="1">6.1.1.4</ecNumber>
    </recommendedName>
    <alternativeName>
        <fullName evidence="1">Leucyl-tRNA synthetase</fullName>
        <shortName evidence="1">LeuRS</shortName>
    </alternativeName>
</protein>
<keyword id="KW-0030">Aminoacyl-tRNA synthetase</keyword>
<keyword id="KW-0067">ATP-binding</keyword>
<keyword id="KW-0963">Cytoplasm</keyword>
<keyword id="KW-0436">Ligase</keyword>
<keyword id="KW-0547">Nucleotide-binding</keyword>
<keyword id="KW-0648">Protein biosynthesis</keyword>
<keyword id="KW-1185">Reference proteome</keyword>
<accession>A8FZ10</accession>
<sequence length="863" mass="98073">MQEQYKPSEIEAKVQQHWQDKKTFEVTEDENKEKFYCLSMFPYPSGRLHMGHVRNYTIGDVVARYQRLQGKNVLQPIGWDSFGLPAENAAIKNNTAPAPWTYENIDYMKNQLKMLGFGYDWSREIATCTPEYYRWEQWFFTKLFEKGLVYKKTASVNWCPNDETVLANEQVIDGCCWRCDTTVEQKEIPQWFIKITEYADELLKDIDQLDEWPEQVKTMQRNWIGRSEGIEMTFGVVDSEETFDIYTTRPDTVMGVTYVAIAAGHPLAEKAAANNSELSDFIEECKNADTTEAAMAAMEKKGVATGLYATHPLTGKQVPIWAANFVLMNYGTGAVMSVPAHDQRDYEFATKYGLAIEGVIKPSDSDLDISEEAYTEKGVLFNSGDSFPELDGLDFQDAFDAIDAKLSSEGKGKRQVNFRLRDWGVSRQRYWGAPIPMVTLADGTVVPTPEDQLPVILPEDVVMDGIQSPIKADKEWAKTQINGQEAFRETDTFDTFMESSWYYARYCSPHADEMLDPAKANYWLPVDQYIGGIEHACMHLLYFRFFHKLLRDIGLVNSDEPAKRLLTQGMVLADAFYYNNEKGARVWVAPSDVTVQETDEKGRIQKAVDSEGHELVYTGMSKMSKSKNNGIDPQVMVDKYGADTVRLFMMFAAPPELTLEWQESSVEGAHRFIKRLWKVAHDHVAKGATAPLDVKTLDTKQKELRRELHKTIVKVGDDIERRQMFNTAIASVMELMNRLQKAPTETQQDRALMQEALSAVVRLLYPIIPHTSFSLWNDLGNEENIEDVRWPEADQSALVEDSKLIIVQVNGKLRAKITVPADATKEVVEEQGFAEEGVIKHTEGKTVRKVIYVPGKLLNIVAN</sequence>
<reference key="1">
    <citation type="submission" date="2007-08" db="EMBL/GenBank/DDBJ databases">
        <title>Complete sequence of Shewanella sediminis HAW-EB3.</title>
        <authorList>
            <consortium name="US DOE Joint Genome Institute"/>
            <person name="Copeland A."/>
            <person name="Lucas S."/>
            <person name="Lapidus A."/>
            <person name="Barry K."/>
            <person name="Glavina del Rio T."/>
            <person name="Dalin E."/>
            <person name="Tice H."/>
            <person name="Pitluck S."/>
            <person name="Chertkov O."/>
            <person name="Brettin T."/>
            <person name="Bruce D."/>
            <person name="Detter J.C."/>
            <person name="Han C."/>
            <person name="Schmutz J."/>
            <person name="Larimer F."/>
            <person name="Land M."/>
            <person name="Hauser L."/>
            <person name="Kyrpides N."/>
            <person name="Kim E."/>
            <person name="Zhao J.-S."/>
            <person name="Richardson P."/>
        </authorList>
    </citation>
    <scope>NUCLEOTIDE SEQUENCE [LARGE SCALE GENOMIC DNA]</scope>
    <source>
        <strain>HAW-EB3</strain>
    </source>
</reference>
<evidence type="ECO:0000255" key="1">
    <source>
        <dbReference type="HAMAP-Rule" id="MF_00049"/>
    </source>
</evidence>